<organism>
    <name type="scientific">Bacillus cereus</name>
    <dbReference type="NCBI Taxonomy" id="1396"/>
    <lineage>
        <taxon>Bacteria</taxon>
        <taxon>Bacillati</taxon>
        <taxon>Bacillota</taxon>
        <taxon>Bacilli</taxon>
        <taxon>Bacillales</taxon>
        <taxon>Bacillaceae</taxon>
        <taxon>Bacillus</taxon>
        <taxon>Bacillus cereus group</taxon>
    </lineage>
</organism>
<gene>
    <name type="primary">gap1</name>
    <name type="ORF">BCE_G9241_5218</name>
</gene>
<proteinExistence type="evidence at protein level"/>
<sequence>MTKIGINGFGRIGRNVFRAALNNSEVEVVAINDLTDAKTLAHLLKYDTVHGTLNAEVSANENSIVVNGKEIKVIAERDPAQLPWSDYGVEVVVESTGRFTKKSDAEKHLGGSVKKVIISAPASDEDITVVMGVNHEQYDAANHNVVSNASCTTNCLAPFAKVLNEKFGVKRGMMTTIHSYTNDQQILDLPHKDLRRARAAAENMIPTSTGAAKAVALVLPELKGKLNGGAVRVPTANVSLVDLVVELDKEVTVEEVNAAFKAAAEGELKGILGYSEEPLVSIDYNGCTASSTIDALSTMVMEGNMVKVLSWYDNETGYSNRVVDLAAYMTSKGL</sequence>
<keyword id="KW-0963">Cytoplasm</keyword>
<keyword id="KW-0903">Direct protein sequencing</keyword>
<keyword id="KW-0324">Glycolysis</keyword>
<keyword id="KW-0520">NAD</keyword>
<keyword id="KW-0547">Nucleotide-binding</keyword>
<keyword id="KW-0560">Oxidoreductase</keyword>
<reference key="1">
    <citation type="journal article" date="2004" name="Proc. Natl. Acad. Sci. U.S.A.">
        <title>Identification of anthrax toxin genes in a Bacillus cereus associated with an illness resembling inhalation anthrax.</title>
        <authorList>
            <person name="Hoffmaster A.R."/>
            <person name="Ravel J."/>
            <person name="Rasko D.A."/>
            <person name="Chapman G.D."/>
            <person name="Chute M.D."/>
            <person name="Marston C.K."/>
            <person name="De B.K."/>
            <person name="Sacchi C.T."/>
            <person name="Fitzgerald C."/>
            <person name="Mayer L.W."/>
            <person name="Maiden M.C.J."/>
            <person name="Priest F.G."/>
            <person name="Barker M."/>
            <person name="Jiang L."/>
            <person name="Cer R.Z."/>
            <person name="Rilstone J."/>
            <person name="Peterson S.N."/>
            <person name="Weyant R.S."/>
            <person name="Galloway D.R."/>
            <person name="Read T.D."/>
            <person name="Popovic T."/>
            <person name="Fraser C.M."/>
        </authorList>
    </citation>
    <scope>NUCLEOTIDE SEQUENCE [GENOMIC DNA]</scope>
    <source>
        <strain>G9241</strain>
    </source>
</reference>
<reference key="2">
    <citation type="journal article" date="2001" name="J. Appl. Microbiol.">
        <title>Heat and salt stress in the food pathogen Bacillus cereus.</title>
        <authorList>
            <person name="Browne N."/>
            <person name="Dowds B.C.A."/>
        </authorList>
    </citation>
    <scope>PROTEIN SEQUENCE OF 2-21</scope>
    <scope>INDUCTION</scope>
    <source>
        <strain>DSM 626 / NCIMB 11796 / T</strain>
    </source>
</reference>
<dbReference type="EC" id="1.2.1.12" evidence="2"/>
<dbReference type="EMBL" id="AAEK01000016">
    <property type="protein sequence ID" value="EAL14305.1"/>
    <property type="molecule type" value="Genomic_DNA"/>
</dbReference>
<dbReference type="SMR" id="Q4MQ58"/>
<dbReference type="eggNOG" id="COG0057">
    <property type="taxonomic scope" value="Bacteria"/>
</dbReference>
<dbReference type="OMA" id="YGYTCNM"/>
<dbReference type="UniPathway" id="UPA00109">
    <property type="reaction ID" value="UER00184"/>
</dbReference>
<dbReference type="GO" id="GO:0005737">
    <property type="term" value="C:cytoplasm"/>
    <property type="evidence" value="ECO:0007669"/>
    <property type="project" value="UniProtKB-SubCell"/>
</dbReference>
<dbReference type="GO" id="GO:0004365">
    <property type="term" value="F:glyceraldehyde-3-phosphate dehydrogenase (NAD+) (phosphorylating) activity"/>
    <property type="evidence" value="ECO:0000250"/>
    <property type="project" value="UniProtKB"/>
</dbReference>
<dbReference type="GO" id="GO:0051287">
    <property type="term" value="F:NAD binding"/>
    <property type="evidence" value="ECO:0000250"/>
    <property type="project" value="UniProtKB"/>
</dbReference>
<dbReference type="GO" id="GO:0050661">
    <property type="term" value="F:NADP binding"/>
    <property type="evidence" value="ECO:0007669"/>
    <property type="project" value="InterPro"/>
</dbReference>
<dbReference type="GO" id="GO:0006006">
    <property type="term" value="P:glucose metabolic process"/>
    <property type="evidence" value="ECO:0007669"/>
    <property type="project" value="InterPro"/>
</dbReference>
<dbReference type="GO" id="GO:0006096">
    <property type="term" value="P:glycolytic process"/>
    <property type="evidence" value="ECO:0007669"/>
    <property type="project" value="UniProtKB-UniPathway"/>
</dbReference>
<dbReference type="CDD" id="cd18126">
    <property type="entry name" value="GAPDH_I_C"/>
    <property type="match status" value="1"/>
</dbReference>
<dbReference type="CDD" id="cd05214">
    <property type="entry name" value="GAPDH_I_N"/>
    <property type="match status" value="1"/>
</dbReference>
<dbReference type="FunFam" id="3.30.360.10:FF:000002">
    <property type="entry name" value="Glyceraldehyde-3-phosphate dehydrogenase"/>
    <property type="match status" value="1"/>
</dbReference>
<dbReference type="FunFam" id="3.40.50.720:FF:000001">
    <property type="entry name" value="Glyceraldehyde-3-phosphate dehydrogenase"/>
    <property type="match status" value="1"/>
</dbReference>
<dbReference type="Gene3D" id="3.30.360.10">
    <property type="entry name" value="Dihydrodipicolinate Reductase, domain 2"/>
    <property type="match status" value="1"/>
</dbReference>
<dbReference type="Gene3D" id="3.40.50.720">
    <property type="entry name" value="NAD(P)-binding Rossmann-like Domain"/>
    <property type="match status" value="1"/>
</dbReference>
<dbReference type="InterPro" id="IPR020831">
    <property type="entry name" value="GlycerAld/Erythrose_P_DH"/>
</dbReference>
<dbReference type="InterPro" id="IPR020830">
    <property type="entry name" value="GlycerAld_3-P_DH_AS"/>
</dbReference>
<dbReference type="InterPro" id="IPR020829">
    <property type="entry name" value="GlycerAld_3-P_DH_cat"/>
</dbReference>
<dbReference type="InterPro" id="IPR020828">
    <property type="entry name" value="GlycerAld_3-P_DH_NAD(P)-bd"/>
</dbReference>
<dbReference type="InterPro" id="IPR006424">
    <property type="entry name" value="Glyceraldehyde-3-P_DH_1"/>
</dbReference>
<dbReference type="InterPro" id="IPR036291">
    <property type="entry name" value="NAD(P)-bd_dom_sf"/>
</dbReference>
<dbReference type="NCBIfam" id="TIGR01534">
    <property type="entry name" value="GAPDH-I"/>
    <property type="match status" value="1"/>
</dbReference>
<dbReference type="PANTHER" id="PTHR43148">
    <property type="entry name" value="GLYCERALDEHYDE-3-PHOSPHATE DEHYDROGENASE 2"/>
    <property type="match status" value="1"/>
</dbReference>
<dbReference type="Pfam" id="PF02800">
    <property type="entry name" value="Gp_dh_C"/>
    <property type="match status" value="1"/>
</dbReference>
<dbReference type="Pfam" id="PF00044">
    <property type="entry name" value="Gp_dh_N"/>
    <property type="match status" value="1"/>
</dbReference>
<dbReference type="PIRSF" id="PIRSF000149">
    <property type="entry name" value="GAP_DH"/>
    <property type="match status" value="1"/>
</dbReference>
<dbReference type="PRINTS" id="PR00078">
    <property type="entry name" value="G3PDHDRGNASE"/>
</dbReference>
<dbReference type="SMART" id="SM00846">
    <property type="entry name" value="Gp_dh_N"/>
    <property type="match status" value="1"/>
</dbReference>
<dbReference type="SUPFAM" id="SSF55347">
    <property type="entry name" value="Glyceraldehyde-3-phosphate dehydrogenase-like, C-terminal domain"/>
    <property type="match status" value="1"/>
</dbReference>
<dbReference type="SUPFAM" id="SSF51735">
    <property type="entry name" value="NAD(P)-binding Rossmann-fold domains"/>
    <property type="match status" value="1"/>
</dbReference>
<dbReference type="PROSITE" id="PS00071">
    <property type="entry name" value="GAPDH"/>
    <property type="match status" value="1"/>
</dbReference>
<name>G3P1_BACCE</name>
<feature type="initiator methionine" description="Removed" evidence="4">
    <location>
        <position position="1"/>
    </location>
</feature>
<feature type="chain" id="PRO_0000271247" description="Glyceraldehyde-3-phosphate dehydrogenase 1">
    <location>
        <begin position="2"/>
        <end position="334"/>
    </location>
</feature>
<feature type="active site" description="Nucleophile" evidence="1">
    <location>
        <position position="151"/>
    </location>
</feature>
<feature type="binding site" evidence="1">
    <location>
        <begin position="11"/>
        <end position="12"/>
    </location>
    <ligand>
        <name>NAD(+)</name>
        <dbReference type="ChEBI" id="CHEBI:57540"/>
    </ligand>
</feature>
<feature type="binding site" evidence="1">
    <location>
        <position position="33"/>
    </location>
    <ligand>
        <name>NAD(+)</name>
        <dbReference type="ChEBI" id="CHEBI:57540"/>
    </ligand>
</feature>
<feature type="binding site" evidence="1">
    <location>
        <position position="77"/>
    </location>
    <ligand>
        <name>NAD(+)</name>
        <dbReference type="ChEBI" id="CHEBI:57540"/>
    </ligand>
</feature>
<feature type="binding site" evidence="1">
    <location>
        <position position="119"/>
    </location>
    <ligand>
        <name>NAD(+)</name>
        <dbReference type="ChEBI" id="CHEBI:57540"/>
    </ligand>
</feature>
<feature type="binding site" evidence="1">
    <location>
        <begin position="150"/>
        <end position="152"/>
    </location>
    <ligand>
        <name>D-glyceraldehyde 3-phosphate</name>
        <dbReference type="ChEBI" id="CHEBI:59776"/>
    </ligand>
</feature>
<feature type="binding site" evidence="1">
    <location>
        <position position="181"/>
    </location>
    <ligand>
        <name>D-glyceraldehyde 3-phosphate</name>
        <dbReference type="ChEBI" id="CHEBI:59776"/>
    </ligand>
</feature>
<feature type="binding site" evidence="1">
    <location>
        <position position="182"/>
    </location>
    <ligand>
        <name>NAD(+)</name>
        <dbReference type="ChEBI" id="CHEBI:57540"/>
    </ligand>
</feature>
<feature type="binding site" evidence="1">
    <location>
        <position position="196"/>
    </location>
    <ligand>
        <name>D-glyceraldehyde 3-phosphate</name>
        <dbReference type="ChEBI" id="CHEBI:59776"/>
    </ligand>
</feature>
<feature type="binding site" evidence="1">
    <location>
        <begin position="209"/>
        <end position="210"/>
    </location>
    <ligand>
        <name>D-glyceraldehyde 3-phosphate</name>
        <dbReference type="ChEBI" id="CHEBI:59776"/>
    </ligand>
</feature>
<feature type="binding site" evidence="1">
    <location>
        <position position="232"/>
    </location>
    <ligand>
        <name>D-glyceraldehyde 3-phosphate</name>
        <dbReference type="ChEBI" id="CHEBI:59776"/>
    </ligand>
</feature>
<feature type="binding site" evidence="1">
    <location>
        <position position="314"/>
    </location>
    <ligand>
        <name>NAD(+)</name>
        <dbReference type="ChEBI" id="CHEBI:57540"/>
    </ligand>
</feature>
<feature type="site" description="Activates thiol group during catalysis" evidence="3">
    <location>
        <position position="178"/>
    </location>
</feature>
<feature type="sequence conflict" description="In Ref. 2; AA sequence." evidence="5" ref="2">
    <original>G</original>
    <variation>R</variation>
    <location>
        <position position="13"/>
    </location>
</feature>
<accession>Q4MQ58</accession>
<accession>P83078</accession>
<evidence type="ECO:0000250" key="1">
    <source>
        <dbReference type="UniProtKB" id="P00362"/>
    </source>
</evidence>
<evidence type="ECO:0000250" key="2">
    <source>
        <dbReference type="UniProtKB" id="P09124"/>
    </source>
</evidence>
<evidence type="ECO:0000250" key="3">
    <source>
        <dbReference type="UniProtKB" id="Q6GIL8"/>
    </source>
</evidence>
<evidence type="ECO:0000269" key="4">
    <source>
    </source>
</evidence>
<evidence type="ECO:0000305" key="5"/>
<protein>
    <recommendedName>
        <fullName evidence="1">Glyceraldehyde-3-phosphate dehydrogenase 1</fullName>
        <shortName evidence="1">GAPDH 1</shortName>
        <ecNumber evidence="2">1.2.1.12</ecNumber>
    </recommendedName>
    <alternativeName>
        <fullName evidence="1">NAD-dependent glyceraldehyde-3-phosphate dehydrogenase</fullName>
    </alternativeName>
</protein>
<comment type="function">
    <text evidence="1">Catalyzes the oxidative phosphorylation of glyceraldehyde 3-phosphate (G3P) to 1,3-bisphosphoglycerate (BPG) using the cofactor NAD. The first reaction step involves the formation of a hemiacetal intermediate between G3P and a cysteine residue, and this hemiacetal intermediate is then oxidized to a thioester, with concomitant reduction of NAD to NADH. The reduced NADH is then exchanged with the second NAD, and the thioester is attacked by a nucleophilic inorganic phosphate to produce BPG.</text>
</comment>
<comment type="catalytic activity">
    <reaction evidence="2">
        <text>D-glyceraldehyde 3-phosphate + phosphate + NAD(+) = (2R)-3-phospho-glyceroyl phosphate + NADH + H(+)</text>
        <dbReference type="Rhea" id="RHEA:10300"/>
        <dbReference type="ChEBI" id="CHEBI:15378"/>
        <dbReference type="ChEBI" id="CHEBI:43474"/>
        <dbReference type="ChEBI" id="CHEBI:57540"/>
        <dbReference type="ChEBI" id="CHEBI:57604"/>
        <dbReference type="ChEBI" id="CHEBI:57945"/>
        <dbReference type="ChEBI" id="CHEBI:59776"/>
        <dbReference type="EC" id="1.2.1.12"/>
    </reaction>
</comment>
<comment type="pathway">
    <text>Carbohydrate degradation; glycolysis; pyruvate from D-glyceraldehyde 3-phosphate: step 1/5.</text>
</comment>
<comment type="subunit">
    <text evidence="1">Homotetramer.</text>
</comment>
<comment type="subcellular location">
    <subcellularLocation>
        <location evidence="5">Cytoplasm</location>
    </subcellularLocation>
</comment>
<comment type="induction">
    <text evidence="4">Repressed by salt stress.</text>
</comment>
<comment type="similarity">
    <text evidence="5">Belongs to the glyceraldehyde-3-phosphate dehydrogenase family.</text>
</comment>